<sequence length="249" mass="28636">MEALMIRGVLEVHTDFTRQNVMIMEPQVLDFTVRGDKLWLHTEHGLLVSMAEYRSELLCTSAFLGYSAVFLLETEDAVTQVRLSDLRLKHRCGIVKADNLLHFALCTVISCVENCNLTRKCLHDLLQYLDAVNVRESFGRLLHHSARRLICSALYLLFEEKEPHIVQYVPATFVLFQQTRHTCLQLVARFFFRLTGQDEAHSFSLKLTERKTVDGWPVGLGLLDVLNANYPNLPSPPKLPPRWERGEEE</sequence>
<accession>P16734</accession>
<accession>Q7M6T6</accession>
<dbReference type="EMBL" id="X17403">
    <property type="protein sequence ID" value="CAA35339.1"/>
    <property type="molecule type" value="Genomic_DNA"/>
</dbReference>
<dbReference type="EMBL" id="BK000394">
    <property type="protein sequence ID" value="DAA00098.1"/>
    <property type="molecule type" value="Genomic_DNA"/>
</dbReference>
<dbReference type="PIR" id="S09868">
    <property type="entry name" value="S09868"/>
</dbReference>
<dbReference type="RefSeq" id="YP_081549.1">
    <property type="nucleotide sequence ID" value="NC_006273.2"/>
</dbReference>
<dbReference type="GeneID" id="3077559"/>
<dbReference type="KEGG" id="vg:3077559"/>
<dbReference type="Proteomes" id="UP000008991">
    <property type="component" value="Segment"/>
</dbReference>
<dbReference type="Proteomes" id="UP000008992">
    <property type="component" value="Segment"/>
</dbReference>
<dbReference type="GO" id="GO:0044177">
    <property type="term" value="C:host cell Golgi apparatus"/>
    <property type="evidence" value="ECO:0007669"/>
    <property type="project" value="UniProtKB-SubCell"/>
</dbReference>
<dbReference type="GO" id="GO:0019033">
    <property type="term" value="C:viral tegument"/>
    <property type="evidence" value="ECO:0007669"/>
    <property type="project" value="UniProtKB-SubCell"/>
</dbReference>
<dbReference type="HAMAP" id="MF_04038">
    <property type="entry name" value="HSV_CEP1"/>
    <property type="match status" value="1"/>
</dbReference>
<dbReference type="InterPro" id="IPR002600">
    <property type="entry name" value="Herpes_UL7"/>
</dbReference>
<dbReference type="Pfam" id="PF01677">
    <property type="entry name" value="Herpes_UL7"/>
    <property type="match status" value="1"/>
</dbReference>
<organismHost>
    <name type="scientific">Homo sapiens</name>
    <name type="common">Human</name>
    <dbReference type="NCBI Taxonomy" id="9606"/>
</organismHost>
<gene>
    <name type="primary">UL103</name>
</gene>
<keyword id="KW-1035">Host cytoplasm</keyword>
<keyword id="KW-1040">Host Golgi apparatus</keyword>
<keyword id="KW-1185">Reference proteome</keyword>
<keyword id="KW-0946">Virion</keyword>
<keyword id="KW-0920">Virion tegument</keyword>
<organism>
    <name type="scientific">Human cytomegalovirus (strain AD169)</name>
    <name type="common">HHV-5</name>
    <name type="synonym">Human herpesvirus 5</name>
    <dbReference type="NCBI Taxonomy" id="10360"/>
    <lineage>
        <taxon>Viruses</taxon>
        <taxon>Duplodnaviria</taxon>
        <taxon>Heunggongvirae</taxon>
        <taxon>Peploviricota</taxon>
        <taxon>Herviviricetes</taxon>
        <taxon>Herpesvirales</taxon>
        <taxon>Orthoherpesviridae</taxon>
        <taxon>Betaherpesvirinae</taxon>
        <taxon>Cytomegalovirus</taxon>
        <taxon>Cytomegalovirus humanbeta5</taxon>
        <taxon>Human cytomegalovirus</taxon>
    </lineage>
</organism>
<reference key="1">
    <citation type="journal article" date="1990" name="Curr. Top. Microbiol. Immunol.">
        <title>Analysis of the protein-coding content of the sequence of human cytomegalovirus strain AD169.</title>
        <authorList>
            <person name="Chee M.S."/>
            <person name="Bankier A.T."/>
            <person name="Beck S."/>
            <person name="Bohni R."/>
            <person name="Brown C.M."/>
            <person name="Cerny R."/>
            <person name="Horsnell T."/>
            <person name="Hutchison C.A. III"/>
            <person name="Kouzarides T."/>
            <person name="Martignetti J.A."/>
            <person name="Preddie E."/>
            <person name="Satchwell S.C."/>
            <person name="Tomlinson P."/>
            <person name="Weston K.M."/>
            <person name="Barrell B.G."/>
        </authorList>
    </citation>
    <scope>NUCLEOTIDE SEQUENCE [LARGE SCALE GENOMIC DNA]</scope>
</reference>
<reference key="2">
    <citation type="journal article" date="2003" name="J. Gen. Virol.">
        <title>The human cytomegalovirus genome revisited: comparison with the chimpanzee cytomegalovirus genome.</title>
        <authorList>
            <person name="Davison A.J."/>
            <person name="Dolan A."/>
            <person name="Akter P."/>
            <person name="Addison C."/>
            <person name="Dargan D.J."/>
            <person name="Alcendor D.J."/>
            <person name="McGeoch D.J."/>
            <person name="Hayward G.S."/>
        </authorList>
    </citation>
    <scope>GENOME REANNOTATION</scope>
</reference>
<reference key="3">
    <citation type="journal article" date="2003" name="J. Gen. Virol.">
        <authorList>
            <person name="Davison A.J."/>
            <person name="Dolan A."/>
            <person name="Akter P."/>
            <person name="Addison C."/>
            <person name="Dargan D.J."/>
            <person name="Alcendor D.J."/>
            <person name="McGeoch D.J."/>
            <person name="Hayward G.S."/>
        </authorList>
    </citation>
    <scope>ERRATUM OF PUBMED:12533697</scope>
</reference>
<reference key="4">
    <citation type="journal article" date="2004" name="J. Virol.">
        <title>Identification of proteins in human cytomegalovirus (HCMV) particles: the HCMV proteome.</title>
        <authorList>
            <person name="Varnum S.M."/>
            <person name="Streblow D.N."/>
            <person name="Monroe M.E."/>
            <person name="Smith P."/>
            <person name="Auberry K.J."/>
            <person name="Pasa-Tolic L."/>
            <person name="Wang D."/>
            <person name="Camp D.G. II"/>
            <person name="Rodland K."/>
            <person name="Wiley S."/>
            <person name="Britt W."/>
            <person name="Shenk T."/>
            <person name="Smith R.D."/>
            <person name="Nelson J.A."/>
        </authorList>
    </citation>
    <scope>IDENTIFICATION</scope>
    <scope>SUBCELLULAR LOCATION</scope>
</reference>
<reference key="5">
    <citation type="journal article" date="2004" name="J. Virol.">
        <authorList>
            <person name="Varnum S.M."/>
            <person name="Streblow D.N."/>
            <person name="Monroe M.E."/>
            <person name="Smith P."/>
            <person name="Auberry K.J."/>
            <person name="Pasa-Tolic L."/>
            <person name="Wang D."/>
            <person name="Camp D.G. II"/>
            <person name="Rodland K."/>
            <person name="Wiley S."/>
            <person name="Britt W."/>
            <person name="Shenk T."/>
            <person name="Smith R.D."/>
            <person name="Nelson J.A."/>
        </authorList>
    </citation>
    <scope>ERRATUM OF PUBMED:15452216</scope>
</reference>
<reference key="6">
    <citation type="journal article" date="2014" name="J. Virol.">
        <title>Identification of human cytomegalovirus genes important for biogenesis of the cytoplasmic virion assembly complex.</title>
        <authorList>
            <person name="Das S."/>
            <person name="Ortiz D.A."/>
            <person name="Gurczynski S.J."/>
            <person name="Khan F."/>
            <person name="Pellett P.E."/>
        </authorList>
    </citation>
    <scope>FUNCTION</scope>
</reference>
<proteinExistence type="inferred from homology"/>
<evidence type="ECO:0000255" key="1">
    <source>
        <dbReference type="HAMAP-Rule" id="MF_04038"/>
    </source>
</evidence>
<evidence type="ECO:0000269" key="2">
    <source>
    </source>
</evidence>
<evidence type="ECO:0000269" key="3">
    <source>
    </source>
</evidence>
<feature type="chain" id="PRO_0000115924" description="Cytoplasmic envelopment protein 1">
    <location>
        <begin position="1"/>
        <end position="249"/>
    </location>
</feature>
<protein>
    <recommendedName>
        <fullName evidence="1">Cytoplasmic envelopment protein 1</fullName>
    </recommendedName>
</protein>
<name>CEP1_HCMVA</name>
<comment type="function">
    <text evidence="1 3">Plays a critical role in cytoplasmic virus egress. Participates in the final step of tegumentation and envelope acquisition within the host cytoplasm.</text>
</comment>
<comment type="subcellular location">
    <subcellularLocation>
        <location evidence="1 2">Virion</location>
    </subcellularLocation>
    <subcellularLocation>
        <location evidence="1 2">Virion tegument</location>
    </subcellularLocation>
    <subcellularLocation>
        <location evidence="1">Host cytoplasm</location>
    </subcellularLocation>
    <subcellularLocation>
        <location evidence="1">Host Golgi apparatus</location>
    </subcellularLocation>
</comment>
<comment type="similarity">
    <text evidence="1">Belongs to the herpesviridae cytoplasmic envelopment protein 1 family.</text>
</comment>